<accession>B7LAE7</accession>
<sequence length="430" mass="45956">MKQALRVAFGFLILWASVLHAEVRIVIDSGVDSGRPIGVVPFQWAGPGAAPEDIGGIVAADLRNSGKFNPLDRARLPQQPGSAQEVQPAAWSALGIDAVVVGQVTPNPDGSYNVAYQLVDTGGAPGTVLAQNSYKVNKQWLRYAGHTASDEVFEKLTGIKGAFRTRIAYVVQTNGGQFPYELRVSDYDGYNQFVVHRSPQPLMSPAWSPDGSKLAYVTFESGRSALVIQTLANGAVRQVASFPRHNGAPAFSPDGSKLAFALSKTGSLNLYVMDLASGQIRQVTDGRSNNTEPTWFPDSQNLAFTSDQAGRPQVYKVNINGGAPQRITWEGSQNQDADVSSDGKFMVMVSSNGGQQHIAKQDLATGGVQVLSSTFLDETPSLAPNGTMVIYSSSQGMGSVLNLVSTDGRFKARLPATDGQVKFPAWSPYL</sequence>
<dbReference type="EMBL" id="CU928145">
    <property type="protein sequence ID" value="CAU96594.1"/>
    <property type="molecule type" value="Genomic_DNA"/>
</dbReference>
<dbReference type="RefSeq" id="WP_001295307.1">
    <property type="nucleotide sequence ID" value="NZ_CP028304.1"/>
</dbReference>
<dbReference type="SMR" id="B7LAE7"/>
<dbReference type="GeneID" id="93776744"/>
<dbReference type="KEGG" id="eck:EC55989_0725"/>
<dbReference type="HOGENOM" id="CLU_047123_0_0_6"/>
<dbReference type="Proteomes" id="UP000000746">
    <property type="component" value="Chromosome"/>
</dbReference>
<dbReference type="GO" id="GO:0042597">
    <property type="term" value="C:periplasmic space"/>
    <property type="evidence" value="ECO:0007669"/>
    <property type="project" value="UniProtKB-SubCell"/>
</dbReference>
<dbReference type="GO" id="GO:0051301">
    <property type="term" value="P:cell division"/>
    <property type="evidence" value="ECO:0007669"/>
    <property type="project" value="UniProtKB-UniRule"/>
</dbReference>
<dbReference type="GO" id="GO:0017038">
    <property type="term" value="P:protein import"/>
    <property type="evidence" value="ECO:0007669"/>
    <property type="project" value="InterPro"/>
</dbReference>
<dbReference type="FunFam" id="2.120.10.30:FF:000022">
    <property type="entry name" value="Tol-Pal system protein TolB"/>
    <property type="match status" value="1"/>
</dbReference>
<dbReference type="FunFam" id="3.40.50.10070:FF:000001">
    <property type="entry name" value="Tol-Pal system protein TolB"/>
    <property type="match status" value="1"/>
</dbReference>
<dbReference type="Gene3D" id="2.120.10.30">
    <property type="entry name" value="TolB, C-terminal domain"/>
    <property type="match status" value="1"/>
</dbReference>
<dbReference type="Gene3D" id="3.40.50.10070">
    <property type="entry name" value="TolB, N-terminal domain"/>
    <property type="match status" value="1"/>
</dbReference>
<dbReference type="HAMAP" id="MF_00671">
    <property type="entry name" value="TolB"/>
    <property type="match status" value="1"/>
</dbReference>
<dbReference type="InterPro" id="IPR011042">
    <property type="entry name" value="6-blade_b-propeller_TolB-like"/>
</dbReference>
<dbReference type="InterPro" id="IPR011659">
    <property type="entry name" value="PD40"/>
</dbReference>
<dbReference type="InterPro" id="IPR014167">
    <property type="entry name" value="Tol-Pal_TolB"/>
</dbReference>
<dbReference type="InterPro" id="IPR007195">
    <property type="entry name" value="TolB_N"/>
</dbReference>
<dbReference type="NCBIfam" id="TIGR02800">
    <property type="entry name" value="propeller_TolB"/>
    <property type="match status" value="1"/>
</dbReference>
<dbReference type="PANTHER" id="PTHR36842:SF1">
    <property type="entry name" value="PROTEIN TOLB"/>
    <property type="match status" value="1"/>
</dbReference>
<dbReference type="PANTHER" id="PTHR36842">
    <property type="entry name" value="PROTEIN TOLB HOMOLOG"/>
    <property type="match status" value="1"/>
</dbReference>
<dbReference type="Pfam" id="PF07676">
    <property type="entry name" value="PD40"/>
    <property type="match status" value="4"/>
</dbReference>
<dbReference type="Pfam" id="PF04052">
    <property type="entry name" value="TolB_N"/>
    <property type="match status" value="1"/>
</dbReference>
<dbReference type="SUPFAM" id="SSF52964">
    <property type="entry name" value="TolB, N-terminal domain"/>
    <property type="match status" value="1"/>
</dbReference>
<dbReference type="SUPFAM" id="SSF69304">
    <property type="entry name" value="Tricorn protease N-terminal domain"/>
    <property type="match status" value="1"/>
</dbReference>
<protein>
    <recommendedName>
        <fullName evidence="1">Tol-Pal system protein TolB</fullName>
    </recommendedName>
</protein>
<proteinExistence type="inferred from homology"/>
<organism>
    <name type="scientific">Escherichia coli (strain 55989 / EAEC)</name>
    <dbReference type="NCBI Taxonomy" id="585055"/>
    <lineage>
        <taxon>Bacteria</taxon>
        <taxon>Pseudomonadati</taxon>
        <taxon>Pseudomonadota</taxon>
        <taxon>Gammaproteobacteria</taxon>
        <taxon>Enterobacterales</taxon>
        <taxon>Enterobacteriaceae</taxon>
        <taxon>Escherichia</taxon>
    </lineage>
</organism>
<feature type="signal peptide" evidence="1">
    <location>
        <begin position="1"/>
        <end position="21"/>
    </location>
</feature>
<feature type="chain" id="PRO_1000147662" description="Tol-Pal system protein TolB" evidence="1">
    <location>
        <begin position="22"/>
        <end position="430"/>
    </location>
</feature>
<name>TOLB_ECO55</name>
<evidence type="ECO:0000255" key="1">
    <source>
        <dbReference type="HAMAP-Rule" id="MF_00671"/>
    </source>
</evidence>
<gene>
    <name evidence="1" type="primary">tolB</name>
    <name type="ordered locus">EC55989_0725</name>
</gene>
<comment type="function">
    <text evidence="1">Part of the Tol-Pal system, which plays a role in outer membrane invagination during cell division and is important for maintaining outer membrane integrity. TolB occupies a key intermediary position in the Tol-Pal system because it communicates directly with both membrane-embedded components, Pal in the outer membrane and TolA in the inner membrane.</text>
</comment>
<comment type="subunit">
    <text evidence="1">The Tol-Pal system is composed of five core proteins: the inner membrane proteins TolA, TolQ and TolR, the periplasmic protein TolB and the outer membrane protein Pal. They form a network linking the inner and outer membranes and the peptidoglycan layer.</text>
</comment>
<comment type="subcellular location">
    <subcellularLocation>
        <location evidence="1">Periplasm</location>
    </subcellularLocation>
</comment>
<comment type="similarity">
    <text evidence="1">Belongs to the TolB family.</text>
</comment>
<reference key="1">
    <citation type="journal article" date="2009" name="PLoS Genet.">
        <title>Organised genome dynamics in the Escherichia coli species results in highly diverse adaptive paths.</title>
        <authorList>
            <person name="Touchon M."/>
            <person name="Hoede C."/>
            <person name="Tenaillon O."/>
            <person name="Barbe V."/>
            <person name="Baeriswyl S."/>
            <person name="Bidet P."/>
            <person name="Bingen E."/>
            <person name="Bonacorsi S."/>
            <person name="Bouchier C."/>
            <person name="Bouvet O."/>
            <person name="Calteau A."/>
            <person name="Chiapello H."/>
            <person name="Clermont O."/>
            <person name="Cruveiller S."/>
            <person name="Danchin A."/>
            <person name="Diard M."/>
            <person name="Dossat C."/>
            <person name="Karoui M.E."/>
            <person name="Frapy E."/>
            <person name="Garry L."/>
            <person name="Ghigo J.M."/>
            <person name="Gilles A.M."/>
            <person name="Johnson J."/>
            <person name="Le Bouguenec C."/>
            <person name="Lescat M."/>
            <person name="Mangenot S."/>
            <person name="Martinez-Jehanne V."/>
            <person name="Matic I."/>
            <person name="Nassif X."/>
            <person name="Oztas S."/>
            <person name="Petit M.A."/>
            <person name="Pichon C."/>
            <person name="Rouy Z."/>
            <person name="Ruf C.S."/>
            <person name="Schneider D."/>
            <person name="Tourret J."/>
            <person name="Vacherie B."/>
            <person name="Vallenet D."/>
            <person name="Medigue C."/>
            <person name="Rocha E.P.C."/>
            <person name="Denamur E."/>
        </authorList>
    </citation>
    <scope>NUCLEOTIDE SEQUENCE [LARGE SCALE GENOMIC DNA]</scope>
    <source>
        <strain>55989 / EAEC</strain>
    </source>
</reference>
<keyword id="KW-0131">Cell cycle</keyword>
<keyword id="KW-0132">Cell division</keyword>
<keyword id="KW-0574">Periplasm</keyword>
<keyword id="KW-1185">Reference proteome</keyword>
<keyword id="KW-0732">Signal</keyword>